<keyword id="KW-0963">Cytoplasm</keyword>
<keyword id="KW-0342">GTP-binding</keyword>
<keyword id="KW-0547">Nucleotide-binding</keyword>
<keyword id="KW-0648">Protein biosynthesis</keyword>
<gene>
    <name evidence="1" type="primary">prfC</name>
    <name type="ordered locus">LMOf2365_1009</name>
</gene>
<accession>Q721H8</accession>
<name>RF3_LISMF</name>
<organism>
    <name type="scientific">Listeria monocytogenes serotype 4b (strain F2365)</name>
    <dbReference type="NCBI Taxonomy" id="265669"/>
    <lineage>
        <taxon>Bacteria</taxon>
        <taxon>Bacillati</taxon>
        <taxon>Bacillota</taxon>
        <taxon>Bacilli</taxon>
        <taxon>Bacillales</taxon>
        <taxon>Listeriaceae</taxon>
        <taxon>Listeria</taxon>
    </lineage>
</organism>
<feature type="chain" id="PRO_0000210948" description="Peptide chain release factor 3">
    <location>
        <begin position="1"/>
        <end position="522"/>
    </location>
</feature>
<feature type="domain" description="tr-type G">
    <location>
        <begin position="10"/>
        <end position="277"/>
    </location>
</feature>
<feature type="binding site" evidence="1">
    <location>
        <begin position="19"/>
        <end position="26"/>
    </location>
    <ligand>
        <name>GTP</name>
        <dbReference type="ChEBI" id="CHEBI:37565"/>
    </ligand>
</feature>
<feature type="binding site" evidence="1">
    <location>
        <begin position="87"/>
        <end position="91"/>
    </location>
    <ligand>
        <name>GTP</name>
        <dbReference type="ChEBI" id="CHEBI:37565"/>
    </ligand>
</feature>
<feature type="binding site" evidence="1">
    <location>
        <begin position="141"/>
        <end position="144"/>
    </location>
    <ligand>
        <name>GTP</name>
        <dbReference type="ChEBI" id="CHEBI:37565"/>
    </ligand>
</feature>
<proteinExistence type="inferred from homology"/>
<evidence type="ECO:0000255" key="1">
    <source>
        <dbReference type="HAMAP-Rule" id="MF_00072"/>
    </source>
</evidence>
<sequence>MSQDLQKEVASRKTFAIISHPDAGKTTITEQLLLFGGVIRSAGTVKGKKSGKFATSDWMEIEKQRGISVTSSVMQFDYNGSRINILDTPGHSDFSEDTYRTLMAVDSAVMVIDAAKGIEAQTLKLFKVCRMRGIPIFTFINKMDRQGKMPLELLAELEEVLGIESYPMNWPIGMGKELAGLYDRYHRVIEQYRSEEDERFLPLGEDGDLKEAHAIQKSLYYDQALEEIMLLDEAGNDFSRERIIAGEQTPVFFGSALTNFGVETFLRTFVDFAPSPSSHESNEGVIEADNPKFSGFIFKIQANMNPAHRDRIAFIRICSGEFERGMNVTLTRTGKSMKLANSTQFMADDRETVNRAVAGDIIGLYDTGNYQIGDTITNGSKKLEFEKLPQFTPELFMRVYAKNVMKQKHFHKGVEQLVQEGAIQLFKTWRTEEYIIGAVGQLQFEVFEHRMRGEYNSEIRMEPIGKKIARWVKEEDADEKLSTARSMLVKDRFDQPLFLFENEFAINWFNDKNPDIELTSLL</sequence>
<reference key="1">
    <citation type="journal article" date="2004" name="Nucleic Acids Res.">
        <title>Whole genome comparisons of serotype 4b and 1/2a strains of the food-borne pathogen Listeria monocytogenes reveal new insights into the core genome components of this species.</title>
        <authorList>
            <person name="Nelson K.E."/>
            <person name="Fouts D.E."/>
            <person name="Mongodin E.F."/>
            <person name="Ravel J."/>
            <person name="DeBoy R.T."/>
            <person name="Kolonay J.F."/>
            <person name="Rasko D.A."/>
            <person name="Angiuoli S.V."/>
            <person name="Gill S.R."/>
            <person name="Paulsen I.T."/>
            <person name="Peterson J.D."/>
            <person name="White O."/>
            <person name="Nelson W.C."/>
            <person name="Nierman W.C."/>
            <person name="Beanan M.J."/>
            <person name="Brinkac L.M."/>
            <person name="Daugherty S.C."/>
            <person name="Dodson R.J."/>
            <person name="Durkin A.S."/>
            <person name="Madupu R."/>
            <person name="Haft D.H."/>
            <person name="Selengut J."/>
            <person name="Van Aken S.E."/>
            <person name="Khouri H.M."/>
            <person name="Fedorova N."/>
            <person name="Forberger H.A."/>
            <person name="Tran B."/>
            <person name="Kathariou S."/>
            <person name="Wonderling L.D."/>
            <person name="Uhlich G.A."/>
            <person name="Bayles D.O."/>
            <person name="Luchansky J.B."/>
            <person name="Fraser C.M."/>
        </authorList>
    </citation>
    <scope>NUCLEOTIDE SEQUENCE [LARGE SCALE GENOMIC DNA]</scope>
    <source>
        <strain>F2365</strain>
    </source>
</reference>
<dbReference type="EMBL" id="AE017262">
    <property type="protein sequence ID" value="AAT03786.1"/>
    <property type="molecule type" value="Genomic_DNA"/>
</dbReference>
<dbReference type="RefSeq" id="WP_003727054.1">
    <property type="nucleotide sequence ID" value="NC_002973.6"/>
</dbReference>
<dbReference type="SMR" id="Q721H8"/>
<dbReference type="KEGG" id="lmf:LMOf2365_1009"/>
<dbReference type="HOGENOM" id="CLU_002794_2_1_9"/>
<dbReference type="GO" id="GO:0005829">
    <property type="term" value="C:cytosol"/>
    <property type="evidence" value="ECO:0007669"/>
    <property type="project" value="TreeGrafter"/>
</dbReference>
<dbReference type="GO" id="GO:0005525">
    <property type="term" value="F:GTP binding"/>
    <property type="evidence" value="ECO:0007669"/>
    <property type="project" value="UniProtKB-UniRule"/>
</dbReference>
<dbReference type="GO" id="GO:0003924">
    <property type="term" value="F:GTPase activity"/>
    <property type="evidence" value="ECO:0007669"/>
    <property type="project" value="InterPro"/>
</dbReference>
<dbReference type="GO" id="GO:0016150">
    <property type="term" value="F:translation release factor activity, codon nonspecific"/>
    <property type="evidence" value="ECO:0007669"/>
    <property type="project" value="TreeGrafter"/>
</dbReference>
<dbReference type="GO" id="GO:0016149">
    <property type="term" value="F:translation release factor activity, codon specific"/>
    <property type="evidence" value="ECO:0007669"/>
    <property type="project" value="UniProtKB-UniRule"/>
</dbReference>
<dbReference type="GO" id="GO:0006449">
    <property type="term" value="P:regulation of translational termination"/>
    <property type="evidence" value="ECO:0007669"/>
    <property type="project" value="UniProtKB-UniRule"/>
</dbReference>
<dbReference type="CDD" id="cd04169">
    <property type="entry name" value="RF3"/>
    <property type="match status" value="1"/>
</dbReference>
<dbReference type="CDD" id="cd03689">
    <property type="entry name" value="RF3_II"/>
    <property type="match status" value="1"/>
</dbReference>
<dbReference type="CDD" id="cd16259">
    <property type="entry name" value="RF3_III"/>
    <property type="match status" value="1"/>
</dbReference>
<dbReference type="FunFam" id="2.40.30.10:FF:000040">
    <property type="entry name" value="Peptide chain release factor 3"/>
    <property type="match status" value="1"/>
</dbReference>
<dbReference type="FunFam" id="3.30.70.3280:FF:000001">
    <property type="entry name" value="Peptide chain release factor 3"/>
    <property type="match status" value="1"/>
</dbReference>
<dbReference type="FunFam" id="3.40.50.300:FF:000542">
    <property type="entry name" value="Peptide chain release factor 3"/>
    <property type="match status" value="1"/>
</dbReference>
<dbReference type="Gene3D" id="3.40.50.300">
    <property type="entry name" value="P-loop containing nucleotide triphosphate hydrolases"/>
    <property type="match status" value="1"/>
</dbReference>
<dbReference type="Gene3D" id="3.30.70.3280">
    <property type="entry name" value="Peptide chain release factor 3, domain III"/>
    <property type="match status" value="1"/>
</dbReference>
<dbReference type="Gene3D" id="2.40.30.10">
    <property type="entry name" value="Translation factors"/>
    <property type="match status" value="1"/>
</dbReference>
<dbReference type="HAMAP" id="MF_00072">
    <property type="entry name" value="Rel_fac_3"/>
    <property type="match status" value="1"/>
</dbReference>
<dbReference type="InterPro" id="IPR053905">
    <property type="entry name" value="EF-G-like_DII"/>
</dbReference>
<dbReference type="InterPro" id="IPR035647">
    <property type="entry name" value="EFG_III/V"/>
</dbReference>
<dbReference type="InterPro" id="IPR031157">
    <property type="entry name" value="G_TR_CS"/>
</dbReference>
<dbReference type="InterPro" id="IPR027417">
    <property type="entry name" value="P-loop_NTPase"/>
</dbReference>
<dbReference type="InterPro" id="IPR004548">
    <property type="entry name" value="PrfC"/>
</dbReference>
<dbReference type="InterPro" id="IPR032090">
    <property type="entry name" value="RF3_C"/>
</dbReference>
<dbReference type="InterPro" id="IPR038467">
    <property type="entry name" value="RF3_dom_3_sf"/>
</dbReference>
<dbReference type="InterPro" id="IPR041732">
    <property type="entry name" value="RF3_GTP-bd"/>
</dbReference>
<dbReference type="InterPro" id="IPR005225">
    <property type="entry name" value="Small_GTP-bd"/>
</dbReference>
<dbReference type="InterPro" id="IPR000795">
    <property type="entry name" value="T_Tr_GTP-bd_dom"/>
</dbReference>
<dbReference type="InterPro" id="IPR009000">
    <property type="entry name" value="Transl_B-barrel_sf"/>
</dbReference>
<dbReference type="NCBIfam" id="TIGR00503">
    <property type="entry name" value="prfC"/>
    <property type="match status" value="1"/>
</dbReference>
<dbReference type="NCBIfam" id="NF001964">
    <property type="entry name" value="PRK00741.1"/>
    <property type="match status" value="1"/>
</dbReference>
<dbReference type="NCBIfam" id="TIGR00231">
    <property type="entry name" value="small_GTP"/>
    <property type="match status" value="1"/>
</dbReference>
<dbReference type="PANTHER" id="PTHR43556">
    <property type="entry name" value="PEPTIDE CHAIN RELEASE FACTOR RF3"/>
    <property type="match status" value="1"/>
</dbReference>
<dbReference type="PANTHER" id="PTHR43556:SF2">
    <property type="entry name" value="PEPTIDE CHAIN RELEASE FACTOR RF3"/>
    <property type="match status" value="1"/>
</dbReference>
<dbReference type="Pfam" id="PF22042">
    <property type="entry name" value="EF-G_D2"/>
    <property type="match status" value="1"/>
</dbReference>
<dbReference type="Pfam" id="PF00009">
    <property type="entry name" value="GTP_EFTU"/>
    <property type="match status" value="1"/>
</dbReference>
<dbReference type="Pfam" id="PF16658">
    <property type="entry name" value="RF3_C"/>
    <property type="match status" value="1"/>
</dbReference>
<dbReference type="PRINTS" id="PR00315">
    <property type="entry name" value="ELONGATNFCT"/>
</dbReference>
<dbReference type="SUPFAM" id="SSF54980">
    <property type="entry name" value="EF-G C-terminal domain-like"/>
    <property type="match status" value="1"/>
</dbReference>
<dbReference type="SUPFAM" id="SSF52540">
    <property type="entry name" value="P-loop containing nucleoside triphosphate hydrolases"/>
    <property type="match status" value="1"/>
</dbReference>
<dbReference type="SUPFAM" id="SSF50447">
    <property type="entry name" value="Translation proteins"/>
    <property type="match status" value="1"/>
</dbReference>
<dbReference type="PROSITE" id="PS00301">
    <property type="entry name" value="G_TR_1"/>
    <property type="match status" value="1"/>
</dbReference>
<dbReference type="PROSITE" id="PS51722">
    <property type="entry name" value="G_TR_2"/>
    <property type="match status" value="1"/>
</dbReference>
<protein>
    <recommendedName>
        <fullName evidence="1">Peptide chain release factor 3</fullName>
        <shortName evidence="1">RF-3</shortName>
    </recommendedName>
</protein>
<comment type="function">
    <text evidence="1">Increases the formation of ribosomal termination complexes and stimulates activities of RF-1 and RF-2. It binds guanine nucleotides and has strong preference for UGA stop codons. It may interact directly with the ribosome. The stimulation of RF-1 and RF-2 is significantly reduced by GTP and GDP, but not by GMP.</text>
</comment>
<comment type="subcellular location">
    <subcellularLocation>
        <location evidence="1">Cytoplasm</location>
    </subcellularLocation>
</comment>
<comment type="similarity">
    <text evidence="1">Belongs to the TRAFAC class translation factor GTPase superfamily. Classic translation factor GTPase family. PrfC subfamily.</text>
</comment>